<dbReference type="EMBL" id="LT708304">
    <property type="protein sequence ID" value="SIU00870.1"/>
    <property type="molecule type" value="Genomic_DNA"/>
</dbReference>
<dbReference type="RefSeq" id="NP_855909.1">
    <property type="nucleotide sequence ID" value="NC_002945.3"/>
</dbReference>
<dbReference type="RefSeq" id="WP_003411516.1">
    <property type="nucleotide sequence ID" value="NC_002945.4"/>
</dbReference>
<dbReference type="KEGG" id="mbo:BQ2027_MB2260C"/>
<dbReference type="PATRIC" id="fig|233413.5.peg.2480"/>
<dbReference type="UniPathway" id="UPA00148"/>
<dbReference type="Proteomes" id="UP000001419">
    <property type="component" value="Chromosome"/>
</dbReference>
<dbReference type="GO" id="GO:0005886">
    <property type="term" value="C:plasma membrane"/>
    <property type="evidence" value="ECO:0007669"/>
    <property type="project" value="UniProtKB-SubCell"/>
</dbReference>
<dbReference type="GO" id="GO:0015420">
    <property type="term" value="F:ABC-type vitamin B12 transporter activity"/>
    <property type="evidence" value="ECO:0007669"/>
    <property type="project" value="UniProtKB-UniRule"/>
</dbReference>
<dbReference type="GO" id="GO:0048472">
    <property type="term" value="F:threonine-phosphate decarboxylase activity"/>
    <property type="evidence" value="ECO:0007669"/>
    <property type="project" value="InterPro"/>
</dbReference>
<dbReference type="GO" id="GO:0009236">
    <property type="term" value="P:cobalamin biosynthetic process"/>
    <property type="evidence" value="ECO:0007669"/>
    <property type="project" value="UniProtKB-UniRule"/>
</dbReference>
<dbReference type="HAMAP" id="MF_00024">
    <property type="entry name" value="CobD_CbiB"/>
    <property type="match status" value="1"/>
</dbReference>
<dbReference type="InterPro" id="IPR004485">
    <property type="entry name" value="Cobalamin_biosynth_CobD/CbiB"/>
</dbReference>
<dbReference type="NCBIfam" id="TIGR00380">
    <property type="entry name" value="cobal_cbiB"/>
    <property type="match status" value="1"/>
</dbReference>
<dbReference type="NCBIfam" id="NF002276">
    <property type="entry name" value="PRK01209.1-4"/>
    <property type="match status" value="1"/>
</dbReference>
<dbReference type="PANTHER" id="PTHR34308">
    <property type="entry name" value="COBALAMIN BIOSYNTHESIS PROTEIN CBIB"/>
    <property type="match status" value="1"/>
</dbReference>
<dbReference type="PANTHER" id="PTHR34308:SF1">
    <property type="entry name" value="COBALAMIN BIOSYNTHESIS PROTEIN CBIB"/>
    <property type="match status" value="1"/>
</dbReference>
<dbReference type="Pfam" id="PF03186">
    <property type="entry name" value="CobD_Cbib"/>
    <property type="match status" value="1"/>
</dbReference>
<organism>
    <name type="scientific">Mycobacterium bovis (strain ATCC BAA-935 / AF2122/97)</name>
    <dbReference type="NCBI Taxonomy" id="233413"/>
    <lineage>
        <taxon>Bacteria</taxon>
        <taxon>Bacillati</taxon>
        <taxon>Actinomycetota</taxon>
        <taxon>Actinomycetes</taxon>
        <taxon>Mycobacteriales</taxon>
        <taxon>Mycobacteriaceae</taxon>
        <taxon>Mycobacterium</taxon>
        <taxon>Mycobacterium tuberculosis complex</taxon>
    </lineage>
</organism>
<protein>
    <recommendedName>
        <fullName evidence="1">Cobalamin biosynthesis protein CobD</fullName>
    </recommendedName>
</protein>
<comment type="function">
    <text evidence="1">Converts cobyric acid to cobinamide by the addition of aminopropanol on the F carboxylic group.</text>
</comment>
<comment type="pathway">
    <text evidence="1">Cofactor biosynthesis; adenosylcobalamin biosynthesis.</text>
</comment>
<comment type="subcellular location">
    <subcellularLocation>
        <location evidence="1">Cell membrane</location>
        <topology evidence="1">Multi-pass membrane protein</topology>
    </subcellularLocation>
</comment>
<comment type="similarity">
    <text evidence="1">Belongs to the CobD/CbiB family.</text>
</comment>
<keyword id="KW-1003">Cell membrane</keyword>
<keyword id="KW-0169">Cobalamin biosynthesis</keyword>
<keyword id="KW-0472">Membrane</keyword>
<keyword id="KW-1185">Reference proteome</keyword>
<keyword id="KW-0812">Transmembrane</keyword>
<keyword id="KW-1133">Transmembrane helix</keyword>
<evidence type="ECO:0000255" key="1">
    <source>
        <dbReference type="HAMAP-Rule" id="MF_00024"/>
    </source>
</evidence>
<reference key="1">
    <citation type="journal article" date="2003" name="Proc. Natl. Acad. Sci. U.S.A.">
        <title>The complete genome sequence of Mycobacterium bovis.</title>
        <authorList>
            <person name="Garnier T."/>
            <person name="Eiglmeier K."/>
            <person name="Camus J.-C."/>
            <person name="Medina N."/>
            <person name="Mansoor H."/>
            <person name="Pryor M."/>
            <person name="Duthoy S."/>
            <person name="Grondin S."/>
            <person name="Lacroix C."/>
            <person name="Monsempe C."/>
            <person name="Simon S."/>
            <person name="Harris B."/>
            <person name="Atkin R."/>
            <person name="Doggett J."/>
            <person name="Mayes R."/>
            <person name="Keating L."/>
            <person name="Wheeler P.R."/>
            <person name="Parkhill J."/>
            <person name="Barrell B.G."/>
            <person name="Cole S.T."/>
            <person name="Gordon S.V."/>
            <person name="Hewinson R.G."/>
        </authorList>
    </citation>
    <scope>NUCLEOTIDE SEQUENCE [LARGE SCALE GENOMIC DNA]</scope>
    <source>
        <strain>ATCC BAA-935 / AF2122/97</strain>
    </source>
</reference>
<reference key="2">
    <citation type="journal article" date="2017" name="Genome Announc.">
        <title>Updated reference genome sequence and annotation of Mycobacterium bovis AF2122/97.</title>
        <authorList>
            <person name="Malone K.M."/>
            <person name="Farrell D."/>
            <person name="Stuber T.P."/>
            <person name="Schubert O.T."/>
            <person name="Aebersold R."/>
            <person name="Robbe-Austerman S."/>
            <person name="Gordon S.V."/>
        </authorList>
    </citation>
    <scope>NUCLEOTIDE SEQUENCE [LARGE SCALE GENOMIC DNA]</scope>
    <scope>GENOME REANNOTATION</scope>
    <source>
        <strain>ATCC BAA-935 / AF2122/97</strain>
    </source>
</reference>
<feature type="chain" id="PRO_0000150932" description="Cobalamin biosynthesis protein CobD">
    <location>
        <begin position="1"/>
        <end position="313"/>
    </location>
</feature>
<feature type="transmembrane region" description="Helical" evidence="1">
    <location>
        <begin position="52"/>
        <end position="72"/>
    </location>
</feature>
<feature type="transmembrane region" description="Helical" evidence="1">
    <location>
        <begin position="79"/>
        <end position="99"/>
    </location>
</feature>
<feature type="transmembrane region" description="Helical" evidence="1">
    <location>
        <begin position="154"/>
        <end position="174"/>
    </location>
</feature>
<feature type="transmembrane region" description="Helical" evidence="1">
    <location>
        <begin position="204"/>
        <end position="224"/>
    </location>
</feature>
<feature type="transmembrane region" description="Helical" evidence="1">
    <location>
        <begin position="289"/>
        <end position="309"/>
    </location>
</feature>
<accession>Q7VEN1</accession>
<accession>A0A1R3Y0N4</accession>
<accession>X2BKH6</accession>
<proteinExistence type="inferred from homology"/>
<gene>
    <name evidence="1" type="primary">cobD</name>
    <name type="ordered locus">BQ2027_MB2260C</name>
</gene>
<name>COBD_MYCBO</name>
<sequence>MFASIWQTRAVGVLIGCLLDVVFGDPKRGHPVALFGRAAAKLEQITYRDGRVAGAVHVGLLVGAVGLLGAALQRLPGRCWPVAATATATWAALGGTSLARTGRQISDLLERDDVEAARRLLPSLCGRDPAQLGGPGLTRAALESVAENTADAQVVPLLWAASSGVPAVLGYRAINTLDSMIGYRSPRYLRFGWAAARLDDWANYVGARATAVLVVICAPVVGGSPRGAVRAWRRDAARHPSPNAGVVEAAFAGALDVRLGGPTRYHHELQIRPTLGDGRSPKVADLRRAVVLSRVVQAGAAVLAVMLVYRRRP</sequence>